<keyword id="KW-0186">Copper</keyword>
<keyword id="KW-0903">Direct protein sequencing</keyword>
<keyword id="KW-1015">Disulfide bond</keyword>
<keyword id="KW-0479">Metal-binding</keyword>
<keyword id="KW-0561">Oxygen transport</keyword>
<keyword id="KW-0677">Repeat</keyword>
<keyword id="KW-0883">Thioether bond</keyword>
<keyword id="KW-0813">Transport</keyword>
<organism>
    <name type="scientific">Sepia officinalis</name>
    <name type="common">Common cuttlefish</name>
    <dbReference type="NCBI Taxonomy" id="6610"/>
    <lineage>
        <taxon>Eukaryota</taxon>
        <taxon>Metazoa</taxon>
        <taxon>Spiralia</taxon>
        <taxon>Lophotrochozoa</taxon>
        <taxon>Mollusca</taxon>
        <taxon>Cephalopoda</taxon>
        <taxon>Coleoidea</taxon>
        <taxon>Decapodiformes</taxon>
        <taxon>Sepiida</taxon>
        <taxon>Sepiina</taxon>
        <taxon>Sepiidae</taxon>
        <taxon>Sepia</taxon>
    </lineage>
</organism>
<evidence type="ECO:0000250" key="1"/>
<evidence type="ECO:0000269" key="2">
    <source>
    </source>
</evidence>
<evidence type="ECO:0000305" key="3"/>
<dbReference type="SMR" id="P56824"/>
<dbReference type="GO" id="GO:0046872">
    <property type="term" value="F:metal ion binding"/>
    <property type="evidence" value="ECO:0007669"/>
    <property type="project" value="UniProtKB-KW"/>
</dbReference>
<dbReference type="GO" id="GO:0016491">
    <property type="term" value="F:oxidoreductase activity"/>
    <property type="evidence" value="ECO:0007669"/>
    <property type="project" value="InterPro"/>
</dbReference>
<dbReference type="GO" id="GO:0005344">
    <property type="term" value="F:oxygen carrier activity"/>
    <property type="evidence" value="ECO:0007669"/>
    <property type="project" value="UniProtKB-KW"/>
</dbReference>
<dbReference type="Gene3D" id="1.10.1280.10">
    <property type="entry name" value="Di-copper center containing domain from catechol oxidase"/>
    <property type="match status" value="1"/>
</dbReference>
<dbReference type="Gene3D" id="2.60.310.10">
    <property type="entry name" value="Haemocyanin C-terminal domain"/>
    <property type="match status" value="1"/>
</dbReference>
<dbReference type="InterPro" id="IPR008922">
    <property type="entry name" value="Di-copper_centre_dom_sf"/>
</dbReference>
<dbReference type="InterPro" id="IPR028999">
    <property type="entry name" value="Haemocyanin_beta-sandwich"/>
</dbReference>
<dbReference type="InterPro" id="IPR036848">
    <property type="entry name" value="Haemocyanin_C_sf"/>
</dbReference>
<dbReference type="InterPro" id="IPR050316">
    <property type="entry name" value="Tyrosinase/Hemocyanin"/>
</dbReference>
<dbReference type="InterPro" id="IPR002227">
    <property type="entry name" value="Tyrosinase_Cu-bd"/>
</dbReference>
<dbReference type="PANTHER" id="PTHR11474:SF76">
    <property type="entry name" value="SHKT DOMAIN-CONTAINING PROTEIN"/>
    <property type="match status" value="1"/>
</dbReference>
<dbReference type="PANTHER" id="PTHR11474">
    <property type="entry name" value="TYROSINASE FAMILY MEMBER"/>
    <property type="match status" value="1"/>
</dbReference>
<dbReference type="Pfam" id="PF14830">
    <property type="entry name" value="Haemocyan_bet_s"/>
    <property type="match status" value="1"/>
</dbReference>
<dbReference type="Pfam" id="PF00264">
    <property type="entry name" value="Tyrosinase"/>
    <property type="match status" value="1"/>
</dbReference>
<dbReference type="SUPFAM" id="SSF81277">
    <property type="entry name" value="C-terminal domain of mollusc hemocyanin"/>
    <property type="match status" value="1"/>
</dbReference>
<dbReference type="SUPFAM" id="SSF48056">
    <property type="entry name" value="Di-copper centre-containing domain"/>
    <property type="match status" value="1"/>
</dbReference>
<dbReference type="PROSITE" id="PS00497">
    <property type="entry name" value="TYROSINASE_1"/>
    <property type="match status" value="1"/>
</dbReference>
<accession>P56824</accession>
<sequence>HGSTKWCPSPDAAQKYACCHHGMATYVLGSENEMPWKFDRAYKSDITHVMDEMKLHYTDKYHVEYKISDMTGAEVTDIKLESSVVFEPGLGKYGEGRAWIEPVTSAVRIRKNLNDLSGDELILRNYIKQMTKDGSYQQIAAFHGLPAQCPSEDGTTVHTCCLHGMPTFPHWHRLYVALVEDELLSRGSRSGRPYWDWIDPFDRLPDFFNDATYYNSRTLHIESNPFFRGSMSFANTLTDRDAQDVIYNNH</sequence>
<protein>
    <recommendedName>
        <fullName>Hemocyanin, units C and D</fullName>
    </recommendedName>
</protein>
<reference key="1">
    <citation type="book" date="1990" name="Invertebrate Dioxygen Carriers">
        <title>Partial sequence determination of Sepia officinalis haemocyanin via cDNA.</title>
        <editorList>
            <person name="Preaux G."/>
            <person name="Lontie R."/>
        </editorList>
        <authorList>
            <person name="Declercq L."/>
            <person name="Witters R."/>
            <person name="Preaux G."/>
        </authorList>
    </citation>
    <scope>NUCLEOTIDE SEQUENCE</scope>
</reference>
<reference key="2">
    <citation type="journal article" date="1997" name="Eur. J. Biochem.">
        <title>Evidence for a cysteine-histidine thioether bridge in functional units of molluscan haemocyanins and location of the disulfide bridges in functional units d and g of the beta-c-haemocyanin of Helix pomatia.</title>
        <authorList>
            <person name="Gielens C."/>
            <person name="de Geest N."/>
            <person name="Xin X.-Q."/>
            <person name="Devreese B."/>
            <person name="van Beeumen J."/>
            <person name="Preaux G."/>
        </authorList>
    </citation>
    <scope>PROTEIN SEQUENCE OF 1-19 AND 230-249</scope>
    <scope>THIOETHER BOND</scope>
    <scope>IDENTIFICATION BY MASS SPECTROMETRY</scope>
</reference>
<proteinExistence type="evidence at protein level"/>
<comment type="function">
    <text>Hemocyanins are copper-containing oxygen carriers occurring freely dissolved in the hemolymph of many mollusks and arthropods.</text>
</comment>
<comment type="cofactor">
    <cofactor>
        <name>Cu(2+)</name>
        <dbReference type="ChEBI" id="CHEBI:29036"/>
    </cofactor>
    <text>Binds 2 copper ions per heterodimer.</text>
</comment>
<comment type="subunit">
    <text>Decamers of large identical subunits (390 kDa), each containing 8 globular oxygen-binding functional units.</text>
</comment>
<comment type="similarity">
    <text evidence="3">Belongs to the tyrosinase family. Hemocyanin subfamily.</text>
</comment>
<name>HCYC_SEPOF</name>
<feature type="chain" id="PRO_0000204308" description="Hemocyanin, units C and D">
    <location>
        <begin position="1" status="less than"/>
        <end position="250" status="greater than"/>
    </location>
</feature>
<feature type="region of interest" description="Unit C">
    <location>
        <begin position="1" status="less than"/>
        <end position="106"/>
    </location>
</feature>
<feature type="region of interest" description="Unit D">
    <location>
        <begin position="107"/>
        <end position="250" status="greater than"/>
    </location>
</feature>
<feature type="binding site" evidence="1">
    <location>
        <position position="1"/>
    </location>
    <ligand>
        <name>Cu cation</name>
        <dbReference type="ChEBI" id="CHEBI:23378"/>
        <label>A</label>
    </ligand>
</feature>
<feature type="binding site" evidence="1">
    <location>
        <position position="21"/>
    </location>
    <ligand>
        <name>Cu cation</name>
        <dbReference type="ChEBI" id="CHEBI:23378"/>
        <label>A</label>
    </ligand>
</feature>
<feature type="binding site" evidence="1">
    <location>
        <position position="143"/>
    </location>
    <ligand>
        <name>Cu cation</name>
        <dbReference type="ChEBI" id="CHEBI:23378"/>
        <label>A</label>
    </ligand>
</feature>
<feature type="binding site" evidence="1">
    <location>
        <position position="172"/>
    </location>
    <ligand>
        <name>Cu cation</name>
        <dbReference type="ChEBI" id="CHEBI:23378"/>
        <label>A</label>
    </ligand>
</feature>
<feature type="disulfide bond" evidence="2">
    <location>
        <begin position="7"/>
        <end position="18"/>
    </location>
</feature>
<feature type="disulfide bond" evidence="1">
    <location>
        <begin position="149"/>
        <end position="160"/>
    </location>
</feature>
<feature type="cross-link" description="2'-(S-cysteinyl)-histidine (Cys-His)" evidence="2">
    <location>
        <begin position="19"/>
        <end position="21"/>
    </location>
</feature>
<feature type="cross-link" description="2'-(S-cysteinyl)-histidine (Cys-His)" evidence="1">
    <location>
        <begin position="161"/>
        <end position="163"/>
    </location>
</feature>
<feature type="non-consecutive residues" evidence="3">
    <location>
        <begin position="25"/>
        <end position="26"/>
    </location>
</feature>
<feature type="non-terminal residue">
    <location>
        <position position="1"/>
    </location>
</feature>
<feature type="non-terminal residue">
    <location>
        <position position="250"/>
    </location>
</feature>